<feature type="chain" id="PRO_1000126906" description="Large ribosomal subunit protein bL9">
    <location>
        <begin position="1"/>
        <end position="149"/>
    </location>
</feature>
<feature type="modified residue" description="N6-acetyllysine" evidence="1">
    <location>
        <position position="89"/>
    </location>
</feature>
<keyword id="KW-0007">Acetylation</keyword>
<keyword id="KW-0687">Ribonucleoprotein</keyword>
<keyword id="KW-0689">Ribosomal protein</keyword>
<keyword id="KW-0694">RNA-binding</keyword>
<keyword id="KW-0699">rRNA-binding</keyword>
<proteinExistence type="inferred from homology"/>
<accession>B7NTQ8</accession>
<sequence>MQVILLDKVANLGSLGDQVNVKAGYARNFLVPQGKAVPATKKNIEFFEARRAELEAKLAEVLAAANARAEKINALETVTIASKAGDEGKLFGSIGTRDIADAVTAAGVEVAKSEVRLPNGVLRTTGEHEVSFQVHSEVFAKVIVNVVAE</sequence>
<organism>
    <name type="scientific">Escherichia coli O7:K1 (strain IAI39 / ExPEC)</name>
    <dbReference type="NCBI Taxonomy" id="585057"/>
    <lineage>
        <taxon>Bacteria</taxon>
        <taxon>Pseudomonadati</taxon>
        <taxon>Pseudomonadota</taxon>
        <taxon>Gammaproteobacteria</taxon>
        <taxon>Enterobacterales</taxon>
        <taxon>Enterobacteriaceae</taxon>
        <taxon>Escherichia</taxon>
    </lineage>
</organism>
<comment type="function">
    <text evidence="1">Binds to the 23S rRNA.</text>
</comment>
<comment type="similarity">
    <text evidence="1">Belongs to the bacterial ribosomal protein bL9 family.</text>
</comment>
<name>RL9_ECO7I</name>
<protein>
    <recommendedName>
        <fullName evidence="1">Large ribosomal subunit protein bL9</fullName>
    </recommendedName>
    <alternativeName>
        <fullName evidence="2">50S ribosomal protein L9</fullName>
    </alternativeName>
</protein>
<dbReference type="EMBL" id="CU928164">
    <property type="protein sequence ID" value="CAR20765.1"/>
    <property type="molecule type" value="Genomic_DNA"/>
</dbReference>
<dbReference type="RefSeq" id="WP_001196062.1">
    <property type="nucleotide sequence ID" value="NC_011750.1"/>
</dbReference>
<dbReference type="RefSeq" id="YP_002410528.1">
    <property type="nucleotide sequence ID" value="NC_011750.1"/>
</dbReference>
<dbReference type="SMR" id="B7NTQ8"/>
<dbReference type="STRING" id="585057.ECIAI39_4667"/>
<dbReference type="GeneID" id="93777620"/>
<dbReference type="KEGG" id="ect:ECIAI39_4667"/>
<dbReference type="PATRIC" id="fig|585057.6.peg.4815"/>
<dbReference type="HOGENOM" id="CLU_078938_4_1_6"/>
<dbReference type="Proteomes" id="UP000000749">
    <property type="component" value="Chromosome"/>
</dbReference>
<dbReference type="GO" id="GO:1990904">
    <property type="term" value="C:ribonucleoprotein complex"/>
    <property type="evidence" value="ECO:0007669"/>
    <property type="project" value="UniProtKB-KW"/>
</dbReference>
<dbReference type="GO" id="GO:0005840">
    <property type="term" value="C:ribosome"/>
    <property type="evidence" value="ECO:0007669"/>
    <property type="project" value="UniProtKB-KW"/>
</dbReference>
<dbReference type="GO" id="GO:0019843">
    <property type="term" value="F:rRNA binding"/>
    <property type="evidence" value="ECO:0007669"/>
    <property type="project" value="UniProtKB-UniRule"/>
</dbReference>
<dbReference type="GO" id="GO:0003735">
    <property type="term" value="F:structural constituent of ribosome"/>
    <property type="evidence" value="ECO:0007669"/>
    <property type="project" value="InterPro"/>
</dbReference>
<dbReference type="GO" id="GO:0006412">
    <property type="term" value="P:translation"/>
    <property type="evidence" value="ECO:0007669"/>
    <property type="project" value="UniProtKB-UniRule"/>
</dbReference>
<dbReference type="FunFam" id="3.10.430.100:FF:000001">
    <property type="entry name" value="50S ribosomal protein L9"/>
    <property type="match status" value="1"/>
</dbReference>
<dbReference type="FunFam" id="3.40.5.10:FF:000001">
    <property type="entry name" value="50S ribosomal protein L9"/>
    <property type="match status" value="1"/>
</dbReference>
<dbReference type="Gene3D" id="3.10.430.100">
    <property type="entry name" value="Ribosomal protein L9, C-terminal domain"/>
    <property type="match status" value="1"/>
</dbReference>
<dbReference type="Gene3D" id="3.40.5.10">
    <property type="entry name" value="Ribosomal protein L9, N-terminal domain"/>
    <property type="match status" value="1"/>
</dbReference>
<dbReference type="HAMAP" id="MF_00503">
    <property type="entry name" value="Ribosomal_bL9"/>
    <property type="match status" value="1"/>
</dbReference>
<dbReference type="InterPro" id="IPR000244">
    <property type="entry name" value="Ribosomal_bL9"/>
</dbReference>
<dbReference type="InterPro" id="IPR009027">
    <property type="entry name" value="Ribosomal_bL9/RNase_H1_N"/>
</dbReference>
<dbReference type="InterPro" id="IPR020594">
    <property type="entry name" value="Ribosomal_bL9_bac/chp"/>
</dbReference>
<dbReference type="InterPro" id="IPR020069">
    <property type="entry name" value="Ribosomal_bL9_C"/>
</dbReference>
<dbReference type="InterPro" id="IPR036791">
    <property type="entry name" value="Ribosomal_bL9_C_sf"/>
</dbReference>
<dbReference type="InterPro" id="IPR020070">
    <property type="entry name" value="Ribosomal_bL9_N"/>
</dbReference>
<dbReference type="InterPro" id="IPR036935">
    <property type="entry name" value="Ribosomal_bL9_N_sf"/>
</dbReference>
<dbReference type="NCBIfam" id="TIGR00158">
    <property type="entry name" value="L9"/>
    <property type="match status" value="1"/>
</dbReference>
<dbReference type="PANTHER" id="PTHR21368">
    <property type="entry name" value="50S RIBOSOMAL PROTEIN L9"/>
    <property type="match status" value="1"/>
</dbReference>
<dbReference type="Pfam" id="PF03948">
    <property type="entry name" value="Ribosomal_L9_C"/>
    <property type="match status" value="1"/>
</dbReference>
<dbReference type="Pfam" id="PF01281">
    <property type="entry name" value="Ribosomal_L9_N"/>
    <property type="match status" value="1"/>
</dbReference>
<dbReference type="SUPFAM" id="SSF55658">
    <property type="entry name" value="L9 N-domain-like"/>
    <property type="match status" value="1"/>
</dbReference>
<dbReference type="SUPFAM" id="SSF55653">
    <property type="entry name" value="Ribosomal protein L9 C-domain"/>
    <property type="match status" value="1"/>
</dbReference>
<dbReference type="PROSITE" id="PS00651">
    <property type="entry name" value="RIBOSOMAL_L9"/>
    <property type="match status" value="1"/>
</dbReference>
<evidence type="ECO:0000255" key="1">
    <source>
        <dbReference type="HAMAP-Rule" id="MF_00503"/>
    </source>
</evidence>
<evidence type="ECO:0000305" key="2"/>
<gene>
    <name evidence="1" type="primary">rplI</name>
    <name type="ordered locus">ECIAI39_4667</name>
</gene>
<reference key="1">
    <citation type="journal article" date="2009" name="PLoS Genet.">
        <title>Organised genome dynamics in the Escherichia coli species results in highly diverse adaptive paths.</title>
        <authorList>
            <person name="Touchon M."/>
            <person name="Hoede C."/>
            <person name="Tenaillon O."/>
            <person name="Barbe V."/>
            <person name="Baeriswyl S."/>
            <person name="Bidet P."/>
            <person name="Bingen E."/>
            <person name="Bonacorsi S."/>
            <person name="Bouchier C."/>
            <person name="Bouvet O."/>
            <person name="Calteau A."/>
            <person name="Chiapello H."/>
            <person name="Clermont O."/>
            <person name="Cruveiller S."/>
            <person name="Danchin A."/>
            <person name="Diard M."/>
            <person name="Dossat C."/>
            <person name="Karoui M.E."/>
            <person name="Frapy E."/>
            <person name="Garry L."/>
            <person name="Ghigo J.M."/>
            <person name="Gilles A.M."/>
            <person name="Johnson J."/>
            <person name="Le Bouguenec C."/>
            <person name="Lescat M."/>
            <person name="Mangenot S."/>
            <person name="Martinez-Jehanne V."/>
            <person name="Matic I."/>
            <person name="Nassif X."/>
            <person name="Oztas S."/>
            <person name="Petit M.A."/>
            <person name="Pichon C."/>
            <person name="Rouy Z."/>
            <person name="Ruf C.S."/>
            <person name="Schneider D."/>
            <person name="Tourret J."/>
            <person name="Vacherie B."/>
            <person name="Vallenet D."/>
            <person name="Medigue C."/>
            <person name="Rocha E.P.C."/>
            <person name="Denamur E."/>
        </authorList>
    </citation>
    <scope>NUCLEOTIDE SEQUENCE [LARGE SCALE GENOMIC DNA]</scope>
    <source>
        <strain>IAI39 / ExPEC</strain>
    </source>
</reference>